<organism>
    <name type="scientific">Lolium perenne</name>
    <name type="common">Perennial ryegrass</name>
    <dbReference type="NCBI Taxonomy" id="4522"/>
    <lineage>
        <taxon>Eukaryota</taxon>
        <taxon>Viridiplantae</taxon>
        <taxon>Streptophyta</taxon>
        <taxon>Embryophyta</taxon>
        <taxon>Tracheophyta</taxon>
        <taxon>Spermatophyta</taxon>
        <taxon>Magnoliopsida</taxon>
        <taxon>Liliopsida</taxon>
        <taxon>Poales</taxon>
        <taxon>Poaceae</taxon>
        <taxon>BOP clade</taxon>
        <taxon>Pooideae</taxon>
        <taxon>Poodae</taxon>
        <taxon>Poeae</taxon>
        <taxon>Poeae Chloroplast Group 2 (Poeae type)</taxon>
        <taxon>Loliodinae</taxon>
        <taxon>Loliinae</taxon>
        <taxon>Lolium</taxon>
    </lineage>
</organism>
<evidence type="ECO:0000255" key="1">
    <source>
        <dbReference type="HAMAP-Rule" id="MF_00445"/>
    </source>
</evidence>
<proteinExistence type="inferred from homology"/>
<keyword id="KW-0150">Chloroplast</keyword>
<keyword id="KW-0472">Membrane</keyword>
<keyword id="KW-0520">NAD</keyword>
<keyword id="KW-0521">NADP</keyword>
<keyword id="KW-0934">Plastid</keyword>
<keyword id="KW-0618">Plastoquinone</keyword>
<keyword id="KW-0874">Quinone</keyword>
<keyword id="KW-0793">Thylakoid</keyword>
<keyword id="KW-1278">Translocase</keyword>
<keyword id="KW-0812">Transmembrane</keyword>
<keyword id="KW-1133">Transmembrane helix</keyword>
<keyword id="KW-0813">Transport</keyword>
<name>NU2C1_LOLPR</name>
<accession>P0CC86</accession>
<accession>A8Y9D0</accession>
<comment type="function">
    <text evidence="1">NDH shuttles electrons from NAD(P)H:plastoquinone, via FMN and iron-sulfur (Fe-S) centers, to quinones in the photosynthetic chain and possibly in a chloroplast respiratory chain. The immediate electron acceptor for the enzyme in this species is believed to be plastoquinone. Couples the redox reaction to proton translocation, and thus conserves the redox energy in a proton gradient.</text>
</comment>
<comment type="catalytic activity">
    <reaction evidence="1">
        <text>a plastoquinone + NADH + (n+1) H(+)(in) = a plastoquinol + NAD(+) + n H(+)(out)</text>
        <dbReference type="Rhea" id="RHEA:42608"/>
        <dbReference type="Rhea" id="RHEA-COMP:9561"/>
        <dbReference type="Rhea" id="RHEA-COMP:9562"/>
        <dbReference type="ChEBI" id="CHEBI:15378"/>
        <dbReference type="ChEBI" id="CHEBI:17757"/>
        <dbReference type="ChEBI" id="CHEBI:57540"/>
        <dbReference type="ChEBI" id="CHEBI:57945"/>
        <dbReference type="ChEBI" id="CHEBI:62192"/>
    </reaction>
</comment>
<comment type="catalytic activity">
    <reaction evidence="1">
        <text>a plastoquinone + NADPH + (n+1) H(+)(in) = a plastoquinol + NADP(+) + n H(+)(out)</text>
        <dbReference type="Rhea" id="RHEA:42612"/>
        <dbReference type="Rhea" id="RHEA-COMP:9561"/>
        <dbReference type="Rhea" id="RHEA-COMP:9562"/>
        <dbReference type="ChEBI" id="CHEBI:15378"/>
        <dbReference type="ChEBI" id="CHEBI:17757"/>
        <dbReference type="ChEBI" id="CHEBI:57783"/>
        <dbReference type="ChEBI" id="CHEBI:58349"/>
        <dbReference type="ChEBI" id="CHEBI:62192"/>
    </reaction>
</comment>
<comment type="subunit">
    <text evidence="1">NDH is composed of at least 16 different subunits, 5 of which are encoded in the nucleus.</text>
</comment>
<comment type="subcellular location">
    <subcellularLocation>
        <location evidence="1">Plastid</location>
        <location evidence="1">Chloroplast thylakoid membrane</location>
        <topology evidence="1">Multi-pass membrane protein</topology>
    </subcellularLocation>
</comment>
<comment type="similarity">
    <text evidence="1">Belongs to the complex I subunit 2 family.</text>
</comment>
<sequence length="510" mass="56757">MIWHVQNENFILDSTRIFMKAFHLLLFNGSFIFPECILIFGLILLLMIDSTSDQKDRPWFYFISSTSLVISITALLFRWREEPIISFSGNFQTNNFNEIFQFLILLCSTLCIPLSVEYIECTEMAITEFLLFILTATLGGMFLCGANDLITIFVAPECFSLCSYLLSGYTKRDLRSNEATMKYLLMGGASSSILVHGFSWLYGSSGGEIELQEIVNGLINTQMYNSPGISIALISITVGLGFKLSPAPFHQWTPDVYEGSPTPVVAFLSVTSKVAASASATRILDIPFYFSSNEWHLLLEILAILSMILGNLLAITQTSMKRMLAYSSIGQIGYVIIGIIVGDSNDGYASMITYMLFYISMNLGTFACIVLFGLRTGTDNIRDYAGLYTKDPFLALSLALCLLSLGGLPPLAGFFGKLYLFWCGWQAGLYFLVSIGLLTSVLSIYYYLKIIKLLMTGRNQEITPYVRNYRRSPLRSNNSIELSMTVCVIASTLPGISMNPILAIAQDTLF</sequence>
<protein>
    <recommendedName>
        <fullName evidence="1">NAD(P)H-quinone oxidoreductase subunit 2 A, chloroplastic</fullName>
        <ecNumber evidence="1">7.1.1.-</ecNumber>
    </recommendedName>
    <alternativeName>
        <fullName evidence="1">NAD(P)H dehydrogenase, subunit 2 A</fullName>
    </alternativeName>
    <alternativeName>
        <fullName evidence="1">NADH-plastoquinone oxidoreductase subunit 2 A</fullName>
    </alternativeName>
</protein>
<geneLocation type="chloroplast"/>
<feature type="chain" id="PRO_0000344271" description="NAD(P)H-quinone oxidoreductase subunit 2 A, chloroplastic">
    <location>
        <begin position="1"/>
        <end position="510"/>
    </location>
</feature>
<feature type="transmembrane region" description="Helical" evidence="1">
    <location>
        <begin position="24"/>
        <end position="44"/>
    </location>
</feature>
<feature type="transmembrane region" description="Helical" evidence="1">
    <location>
        <begin position="59"/>
        <end position="79"/>
    </location>
</feature>
<feature type="transmembrane region" description="Helical" evidence="1">
    <location>
        <begin position="99"/>
        <end position="119"/>
    </location>
</feature>
<feature type="transmembrane region" description="Helical" evidence="1">
    <location>
        <begin position="124"/>
        <end position="144"/>
    </location>
</feature>
<feature type="transmembrane region" description="Helical" evidence="1">
    <location>
        <begin position="149"/>
        <end position="169"/>
    </location>
</feature>
<feature type="transmembrane region" description="Helical" evidence="1">
    <location>
        <begin position="183"/>
        <end position="203"/>
    </location>
</feature>
<feature type="transmembrane region" description="Helical" evidence="1">
    <location>
        <begin position="229"/>
        <end position="249"/>
    </location>
</feature>
<feature type="transmembrane region" description="Helical" evidence="1">
    <location>
        <begin position="295"/>
        <end position="315"/>
    </location>
</feature>
<feature type="transmembrane region" description="Helical" evidence="1">
    <location>
        <begin position="323"/>
        <end position="343"/>
    </location>
</feature>
<feature type="transmembrane region" description="Helical" evidence="1">
    <location>
        <begin position="354"/>
        <end position="374"/>
    </location>
</feature>
<feature type="transmembrane region" description="Helical" evidence="1">
    <location>
        <begin position="395"/>
        <end position="415"/>
    </location>
</feature>
<feature type="transmembrane region" description="Helical" evidence="1">
    <location>
        <begin position="418"/>
        <end position="438"/>
    </location>
</feature>
<dbReference type="EC" id="7.1.1.-" evidence="1"/>
<dbReference type="EMBL" id="AM777385">
    <property type="protein sequence ID" value="CAO86019.1"/>
    <property type="molecule type" value="Genomic_DNA"/>
</dbReference>
<dbReference type="SMR" id="P0CC86"/>
<dbReference type="KEGG" id="lper:5696562"/>
<dbReference type="KEGG" id="lper:5696583"/>
<dbReference type="GO" id="GO:0009535">
    <property type="term" value="C:chloroplast thylakoid membrane"/>
    <property type="evidence" value="ECO:0007669"/>
    <property type="project" value="UniProtKB-SubCell"/>
</dbReference>
<dbReference type="GO" id="GO:0008137">
    <property type="term" value="F:NADH dehydrogenase (ubiquinone) activity"/>
    <property type="evidence" value="ECO:0007669"/>
    <property type="project" value="InterPro"/>
</dbReference>
<dbReference type="GO" id="GO:0048038">
    <property type="term" value="F:quinone binding"/>
    <property type="evidence" value="ECO:0007669"/>
    <property type="project" value="UniProtKB-KW"/>
</dbReference>
<dbReference type="GO" id="GO:0042773">
    <property type="term" value="P:ATP synthesis coupled electron transport"/>
    <property type="evidence" value="ECO:0007669"/>
    <property type="project" value="InterPro"/>
</dbReference>
<dbReference type="GO" id="GO:0019684">
    <property type="term" value="P:photosynthesis, light reaction"/>
    <property type="evidence" value="ECO:0007669"/>
    <property type="project" value="UniProtKB-UniRule"/>
</dbReference>
<dbReference type="HAMAP" id="MF_00445">
    <property type="entry name" value="NDH1_NuoN_1"/>
    <property type="match status" value="1"/>
</dbReference>
<dbReference type="InterPro" id="IPR010096">
    <property type="entry name" value="NADH-Q_OxRdtase_suN/2"/>
</dbReference>
<dbReference type="InterPro" id="IPR001750">
    <property type="entry name" value="ND/Mrp_TM"/>
</dbReference>
<dbReference type="InterPro" id="IPR045693">
    <property type="entry name" value="Ndh2_N"/>
</dbReference>
<dbReference type="NCBIfam" id="TIGR01770">
    <property type="entry name" value="NDH_I_N"/>
    <property type="match status" value="1"/>
</dbReference>
<dbReference type="NCBIfam" id="NF002701">
    <property type="entry name" value="PRK02504.1"/>
    <property type="match status" value="1"/>
</dbReference>
<dbReference type="PANTHER" id="PTHR22773">
    <property type="entry name" value="NADH DEHYDROGENASE"/>
    <property type="match status" value="1"/>
</dbReference>
<dbReference type="Pfam" id="PF19530">
    <property type="entry name" value="Ndh2_N"/>
    <property type="match status" value="1"/>
</dbReference>
<dbReference type="Pfam" id="PF00361">
    <property type="entry name" value="Proton_antipo_M"/>
    <property type="match status" value="1"/>
</dbReference>
<dbReference type="PRINTS" id="PR01434">
    <property type="entry name" value="NADHDHGNASE5"/>
</dbReference>
<reference key="1">
    <citation type="journal article" date="2008" name="PLoS ONE">
        <title>An optimized chloroplast DNA extraction protocol for grasses (Poaceae) proves suitable for whole plastid genome sequencing and SNP detection.</title>
        <authorList>
            <person name="Diekmann K."/>
            <person name="Hodkinson T.R."/>
            <person name="Fricke E."/>
            <person name="Barth S."/>
        </authorList>
    </citation>
    <scope>NUCLEOTIDE SEQUENCE [LARGE SCALE GENOMIC DNA]</scope>
    <source>
        <strain>cv. Cashel</strain>
    </source>
</reference>
<gene>
    <name evidence="1" type="primary">ndhB1</name>
    <name type="ordered locus">LopeCp088</name>
</gene>